<feature type="chain" id="PRO_1000198879" description="Arginine--tRNA ligase">
    <location>
        <begin position="1"/>
        <end position="574"/>
    </location>
</feature>
<feature type="short sequence motif" description="'HIGH' region">
    <location>
        <begin position="121"/>
        <end position="131"/>
    </location>
</feature>
<comment type="catalytic activity">
    <reaction evidence="1">
        <text>tRNA(Arg) + L-arginine + ATP = L-arginyl-tRNA(Arg) + AMP + diphosphate</text>
        <dbReference type="Rhea" id="RHEA:20301"/>
        <dbReference type="Rhea" id="RHEA-COMP:9658"/>
        <dbReference type="Rhea" id="RHEA-COMP:9673"/>
        <dbReference type="ChEBI" id="CHEBI:30616"/>
        <dbReference type="ChEBI" id="CHEBI:32682"/>
        <dbReference type="ChEBI" id="CHEBI:33019"/>
        <dbReference type="ChEBI" id="CHEBI:78442"/>
        <dbReference type="ChEBI" id="CHEBI:78513"/>
        <dbReference type="ChEBI" id="CHEBI:456215"/>
        <dbReference type="EC" id="6.1.1.19"/>
    </reaction>
</comment>
<comment type="subunit">
    <text evidence="1">Monomer.</text>
</comment>
<comment type="subcellular location">
    <subcellularLocation>
        <location evidence="1">Cytoplasm</location>
    </subcellularLocation>
</comment>
<comment type="similarity">
    <text evidence="1">Belongs to the class-I aminoacyl-tRNA synthetase family.</text>
</comment>
<organism>
    <name type="scientific">Buchnera aphidicola subsp. Acyrthosiphon pisum (strain 5A)</name>
    <dbReference type="NCBI Taxonomy" id="563178"/>
    <lineage>
        <taxon>Bacteria</taxon>
        <taxon>Pseudomonadati</taxon>
        <taxon>Pseudomonadota</taxon>
        <taxon>Gammaproteobacteria</taxon>
        <taxon>Enterobacterales</taxon>
        <taxon>Erwiniaceae</taxon>
        <taxon>Buchnera</taxon>
    </lineage>
</organism>
<accession>B8D940</accession>
<dbReference type="EC" id="6.1.1.19" evidence="1"/>
<dbReference type="EMBL" id="CP001161">
    <property type="protein sequence ID" value="ACL30611.1"/>
    <property type="molecule type" value="Genomic_DNA"/>
</dbReference>
<dbReference type="RefSeq" id="WP_009874199.1">
    <property type="nucleotide sequence ID" value="NC_011833.1"/>
</dbReference>
<dbReference type="SMR" id="B8D940"/>
<dbReference type="KEGG" id="bap:BUAP5A_238"/>
<dbReference type="HOGENOM" id="CLU_006406_5_1_6"/>
<dbReference type="OrthoDB" id="9803211at2"/>
<dbReference type="Proteomes" id="UP000006904">
    <property type="component" value="Chromosome"/>
</dbReference>
<dbReference type="GO" id="GO:0005737">
    <property type="term" value="C:cytoplasm"/>
    <property type="evidence" value="ECO:0007669"/>
    <property type="project" value="UniProtKB-SubCell"/>
</dbReference>
<dbReference type="GO" id="GO:0004814">
    <property type="term" value="F:arginine-tRNA ligase activity"/>
    <property type="evidence" value="ECO:0007669"/>
    <property type="project" value="UniProtKB-UniRule"/>
</dbReference>
<dbReference type="GO" id="GO:0005524">
    <property type="term" value="F:ATP binding"/>
    <property type="evidence" value="ECO:0007669"/>
    <property type="project" value="UniProtKB-UniRule"/>
</dbReference>
<dbReference type="GO" id="GO:0006420">
    <property type="term" value="P:arginyl-tRNA aminoacylation"/>
    <property type="evidence" value="ECO:0007669"/>
    <property type="project" value="UniProtKB-UniRule"/>
</dbReference>
<dbReference type="CDD" id="cd07956">
    <property type="entry name" value="Anticodon_Ia_Arg"/>
    <property type="match status" value="1"/>
</dbReference>
<dbReference type="CDD" id="cd00671">
    <property type="entry name" value="ArgRS_core"/>
    <property type="match status" value="1"/>
</dbReference>
<dbReference type="FunFam" id="3.40.50.620:FF:000030">
    <property type="entry name" value="Arginine--tRNA ligase"/>
    <property type="match status" value="1"/>
</dbReference>
<dbReference type="FunFam" id="1.10.730.10:FF:000006">
    <property type="entry name" value="Arginyl-tRNA synthetase 2, mitochondrial"/>
    <property type="match status" value="1"/>
</dbReference>
<dbReference type="Gene3D" id="3.30.1360.70">
    <property type="entry name" value="Arginyl tRNA synthetase N-terminal domain"/>
    <property type="match status" value="1"/>
</dbReference>
<dbReference type="Gene3D" id="3.40.50.620">
    <property type="entry name" value="HUPs"/>
    <property type="match status" value="1"/>
</dbReference>
<dbReference type="Gene3D" id="1.10.730.10">
    <property type="entry name" value="Isoleucyl-tRNA Synthetase, Domain 1"/>
    <property type="match status" value="1"/>
</dbReference>
<dbReference type="HAMAP" id="MF_00123">
    <property type="entry name" value="Arg_tRNA_synth"/>
    <property type="match status" value="1"/>
</dbReference>
<dbReference type="InterPro" id="IPR001412">
    <property type="entry name" value="aa-tRNA-synth_I_CS"/>
</dbReference>
<dbReference type="InterPro" id="IPR001278">
    <property type="entry name" value="Arg-tRNA-ligase"/>
</dbReference>
<dbReference type="InterPro" id="IPR005148">
    <property type="entry name" value="Arg-tRNA-synth_N"/>
</dbReference>
<dbReference type="InterPro" id="IPR036695">
    <property type="entry name" value="Arg-tRNA-synth_N_sf"/>
</dbReference>
<dbReference type="InterPro" id="IPR035684">
    <property type="entry name" value="ArgRS_core"/>
</dbReference>
<dbReference type="InterPro" id="IPR008909">
    <property type="entry name" value="DALR_anticod-bd"/>
</dbReference>
<dbReference type="InterPro" id="IPR014729">
    <property type="entry name" value="Rossmann-like_a/b/a_fold"/>
</dbReference>
<dbReference type="InterPro" id="IPR009080">
    <property type="entry name" value="tRNAsynth_Ia_anticodon-bd"/>
</dbReference>
<dbReference type="NCBIfam" id="TIGR00456">
    <property type="entry name" value="argS"/>
    <property type="match status" value="1"/>
</dbReference>
<dbReference type="PANTHER" id="PTHR11956:SF5">
    <property type="entry name" value="ARGININE--TRNA LIGASE, CYTOPLASMIC"/>
    <property type="match status" value="1"/>
</dbReference>
<dbReference type="PANTHER" id="PTHR11956">
    <property type="entry name" value="ARGINYL-TRNA SYNTHETASE"/>
    <property type="match status" value="1"/>
</dbReference>
<dbReference type="Pfam" id="PF03485">
    <property type="entry name" value="Arg_tRNA_synt_N"/>
    <property type="match status" value="1"/>
</dbReference>
<dbReference type="Pfam" id="PF05746">
    <property type="entry name" value="DALR_1"/>
    <property type="match status" value="1"/>
</dbReference>
<dbReference type="Pfam" id="PF00750">
    <property type="entry name" value="tRNA-synt_1d"/>
    <property type="match status" value="1"/>
</dbReference>
<dbReference type="PRINTS" id="PR01038">
    <property type="entry name" value="TRNASYNTHARG"/>
</dbReference>
<dbReference type="SMART" id="SM01016">
    <property type="entry name" value="Arg_tRNA_synt_N"/>
    <property type="match status" value="1"/>
</dbReference>
<dbReference type="SMART" id="SM00836">
    <property type="entry name" value="DALR_1"/>
    <property type="match status" value="1"/>
</dbReference>
<dbReference type="SUPFAM" id="SSF47323">
    <property type="entry name" value="Anticodon-binding domain of a subclass of class I aminoacyl-tRNA synthetases"/>
    <property type="match status" value="1"/>
</dbReference>
<dbReference type="SUPFAM" id="SSF55190">
    <property type="entry name" value="Arginyl-tRNA synthetase (ArgRS), N-terminal 'additional' domain"/>
    <property type="match status" value="1"/>
</dbReference>
<dbReference type="SUPFAM" id="SSF52374">
    <property type="entry name" value="Nucleotidylyl transferase"/>
    <property type="match status" value="1"/>
</dbReference>
<dbReference type="PROSITE" id="PS00178">
    <property type="entry name" value="AA_TRNA_LIGASE_I"/>
    <property type="match status" value="1"/>
</dbReference>
<reference key="1">
    <citation type="journal article" date="2009" name="Science">
        <title>The dynamics and time scale of ongoing genomic erosion in symbiotic bacteria.</title>
        <authorList>
            <person name="Moran N.A."/>
            <person name="McLaughlin H.J."/>
            <person name="Sorek R."/>
        </authorList>
    </citation>
    <scope>NUCLEOTIDE SEQUENCE [LARGE SCALE GENOMIC DNA]</scope>
    <source>
        <strain>5A</strain>
    </source>
</reference>
<name>SYR_BUCA5</name>
<gene>
    <name evidence="1" type="primary">argS</name>
    <name type="ordered locus">BUAP5A_238</name>
</gene>
<keyword id="KW-0030">Aminoacyl-tRNA synthetase</keyword>
<keyword id="KW-0067">ATP-binding</keyword>
<keyword id="KW-0963">Cytoplasm</keyword>
<keyword id="KW-0436">Ligase</keyword>
<keyword id="KW-0547">Nucleotide-binding</keyword>
<keyword id="KW-0648">Protein biosynthesis</keyword>
<evidence type="ECO:0000255" key="1">
    <source>
        <dbReference type="HAMAP-Rule" id="MF_00123"/>
    </source>
</evidence>
<proteinExistence type="inferred from homology"/>
<protein>
    <recommendedName>
        <fullName evidence="1">Arginine--tRNA ligase</fullName>
        <ecNumber evidence="1">6.1.1.19</ecNumber>
    </recommendedName>
    <alternativeName>
        <fullName evidence="1">Arginyl-tRNA synthetase</fullName>
        <shortName evidence="1">ArgRS</shortName>
    </alternativeName>
</protein>
<sequence>MNLKNTIKEDIQDALIKIAIINCDPVITLNKKTKIGHYQLNNLIKIANISNLKPFELANRIILNIKKKYMYKEITFSQPGFINFLINPYWISEQLEKIFLSPRLGINHVNAQNIVIDYSSPNIAKEMHIGHLRSTIIGDVMARILDFLGHNVIRANHIGDWGTQFGMLIAYLEVKKLVNSPLSLMKLEEYYCKAKKKYDIDQLFAEKSREYVVKLQNGDQYCYSIWKKLVSITMLENCKIYKRLHVTLKKKHTMGESIYNKMLPNIIEDLKNKKIAIEKNGSTIVFLKEFKNRLGEPMGVVIQKKDKGFLYSTTDIACLKYRYQVLHADRIIYYTDSRQHQHLLQAWTIAKKALYISQNLLLEHHIFGMMLSKDKRPFKTRDGDTIKLSALLDEATERAMRLIKNKQPNLSKKKLNQLSNIIGVGAVKYADLSKNRNTNYIFDWNEMLSFEGNTAPYIQYAYTRIVSILKKSNMPIKKLKEKIFLTKESEINLAIKILEFEEIILLISQKGTPHILCKYLYHLATSFSHFYENCSILFPKKIKTCKSRLKLSILTAKTLKKGLNMLGIRVVKKM</sequence>